<organism>
    <name type="scientific">Salmonella phage P22</name>
    <name type="common">Bacteriophage P22</name>
    <dbReference type="NCBI Taxonomy" id="10754"/>
    <lineage>
        <taxon>Viruses</taxon>
        <taxon>Duplodnaviria</taxon>
        <taxon>Heunggongvirae</taxon>
        <taxon>Uroviricota</taxon>
        <taxon>Caudoviricetes</taxon>
        <taxon>Lederbergvirus</taxon>
    </lineage>
</organism>
<proteinExistence type="predicted"/>
<protein>
    <recommendedName>
        <fullName>Putative protein ninY</fullName>
    </recommendedName>
</protein>
<name>NINY_BPP22</name>
<organismHost>
    <name type="scientific">Salmonella typhimurium</name>
    <dbReference type="NCBI Taxonomy" id="90371"/>
</organismHost>
<gene>
    <name type="primary">ninY</name>
</gene>
<sequence>MSKIQYPMTTAAIFDDVVYPLHFDNAGKVRQEMEGAVNWFCRWCNEEKAAVKARLLVSCWGQYLSHEQVIREAA</sequence>
<feature type="chain" id="PRO_0000077638" description="Putative protein ninY">
    <location>
        <begin position="1"/>
        <end position="74"/>
    </location>
</feature>
<dbReference type="EMBL" id="X78401">
    <property type="protein sequence ID" value="CAA55164.1"/>
    <property type="molecule type" value="Genomic_DNA"/>
</dbReference>
<dbReference type="EMBL" id="AF217253">
    <property type="protein sequence ID" value="AAF75036.1"/>
    <property type="molecule type" value="Genomic_DNA"/>
</dbReference>
<dbReference type="EMBL" id="BK000583">
    <property type="protein sequence ID" value="DAA01034.1"/>
    <property type="molecule type" value="Genomic_DNA"/>
</dbReference>
<dbReference type="RefSeq" id="NP_059618.1">
    <property type="nucleotide sequence ID" value="NC_002371.2"/>
</dbReference>
<dbReference type="GeneID" id="1262816"/>
<dbReference type="KEGG" id="vg:1262816"/>
<dbReference type="OrthoDB" id="20187at10239"/>
<dbReference type="Proteomes" id="UP000001795">
    <property type="component" value="Segment"/>
</dbReference>
<dbReference type="Proteomes" id="UP000007960">
    <property type="component" value="Segment"/>
</dbReference>
<reference key="1">
    <citation type="submission" date="1994-05" db="EMBL/GenBank/DDBJ databases">
        <title>Nucleotide sequence of PR-operon of P22 is a mosaic of other lambdoid chromosomes and reveals functional implications for the late gene expression.</title>
        <authorList>
            <person name="Kroeger M."/>
            <person name="Hobom G."/>
        </authorList>
    </citation>
    <scope>NUCLEOTIDE SEQUENCE [GENOMIC DNA]</scope>
</reference>
<reference key="2">
    <citation type="journal article" date="2000" name="J. Bacteriol.">
        <title>Sequence of the genome of Salmonella bacteriophage P22.</title>
        <authorList>
            <person name="Vander Byl C.S."/>
            <person name="Kropinski A.M.B."/>
        </authorList>
    </citation>
    <scope>NUCLEOTIDE SEQUENCE [LARGE SCALE GENOMIC DNA]</scope>
</reference>
<reference key="3">
    <citation type="journal article" date="2003" name="J. Bacteriol.">
        <title>Corrected sequence of the bacteriophage P22 genome.</title>
        <authorList>
            <person name="Pedulla M.L."/>
            <person name="Ford M.E."/>
            <person name="Karthikeyan T."/>
            <person name="Houtz J.M."/>
            <person name="Hendrix R.W."/>
            <person name="Hatfull G.F."/>
            <person name="Poteete A.R."/>
            <person name="Gilcrease E.B."/>
            <person name="Winn-Stapley D.A."/>
            <person name="Casjens S.R."/>
        </authorList>
    </citation>
    <scope>NUCLEOTIDE SEQUENCE [LARGE SCALE GENOMIC DNA]</scope>
</reference>
<accession>Q38668</accession>
<accession>Q7PCE0</accession>
<keyword id="KW-1185">Reference proteome</keyword>